<organism>
    <name type="scientific">Culex quinquefasciatus</name>
    <name type="common">Southern house mosquito</name>
    <name type="synonym">Culex pungens</name>
    <dbReference type="NCBI Taxonomy" id="7176"/>
    <lineage>
        <taxon>Eukaryota</taxon>
        <taxon>Metazoa</taxon>
        <taxon>Ecdysozoa</taxon>
        <taxon>Arthropoda</taxon>
        <taxon>Hexapoda</taxon>
        <taxon>Insecta</taxon>
        <taxon>Pterygota</taxon>
        <taxon>Neoptera</taxon>
        <taxon>Endopterygota</taxon>
        <taxon>Diptera</taxon>
        <taxon>Nematocera</taxon>
        <taxon>Culicoidea</taxon>
        <taxon>Culicidae</taxon>
        <taxon>Culicinae</taxon>
        <taxon>Culicini</taxon>
        <taxon>Culex</taxon>
        <taxon>Culex</taxon>
    </lineage>
</organism>
<gene>
    <name evidence="1" type="primary">Tret1</name>
    <name type="ORF">CPIJ004516</name>
</gene>
<evidence type="ECO:0000250" key="1">
    <source>
        <dbReference type="UniProtKB" id="Q7PIR5"/>
    </source>
</evidence>
<evidence type="ECO:0000255" key="2"/>
<evidence type="ECO:0000312" key="3">
    <source>
        <dbReference type="EMBL" id="EDS43198.1"/>
    </source>
</evidence>
<proteinExistence type="inferred from homology"/>
<keyword id="KW-1003">Cell membrane</keyword>
<keyword id="KW-0325">Glycoprotein</keyword>
<keyword id="KW-0472">Membrane</keyword>
<keyword id="KW-1185">Reference proteome</keyword>
<keyword id="KW-0762">Sugar transport</keyword>
<keyword id="KW-0812">Transmembrane</keyword>
<keyword id="KW-1133">Transmembrane helix</keyword>
<keyword id="KW-0813">Transport</keyword>
<comment type="function">
    <text evidence="1">High-capacity facilitative transporter for trehalose. Does not transport maltose, sucrose or lactose. Mediates the bidirectional transfer of trehalose. Responsible for the transport of trehalose synthesized in the fat body and the incorporation of trehalose into other tissues that require a carbon source, thereby regulating trehalose levels in the hemolymph (By similarity).</text>
</comment>
<comment type="subcellular location">
    <subcellularLocation>
        <location evidence="1 2">Cell membrane</location>
        <topology evidence="1 2">Multi-pass membrane protein</topology>
    </subcellularLocation>
</comment>
<comment type="similarity">
    <text evidence="1 2">Belongs to the major facilitator superfamily. Sugar transporter (TC 2.A.1.1) family. Trehalose transporter subfamily.</text>
</comment>
<protein>
    <recommendedName>
        <fullName evidence="1">Facilitated trehalose transporter Tret1</fullName>
    </recommendedName>
</protein>
<sequence>MWIEIPECYEVLRNVFSKFRRHSLTAAMVKLLMRADTHVSFTVPAEEPVAKCTFSQVLAALSVSLGSMVVGFSSAYTSPALVSMKDRNITSFEVTDQSGSWVGGIMPLAGLVGGILGGPLIEYLGRKNTILATATPFIISWLLIACATHVAMVLVGRALSGFSVGVASLSLPVYLGETVQPEVRGTLGLLPTAFGNIGILLCFVAGNYMDWSELAFLGATLPVPFLILMFLIPETPRWYVSRGRDDRARKALQWLRGKKADVDPELKGIIKSHQDAERHASQSAMLDLLKKTNLKPLLISLGLMFFQQLSGINAVIFYTVQIFQDAGSTIDENLCTIIVGVVNFIATFIATLLIDRLGRKMLLYISDIAMIITLMTLGGFFYVKNNGGDVSHIGWLPLASFVIFVLGFSLGFGPIPWLMMGEILPGKIRGSAASVATAFNWSCTFVVTKTFADIIASIGTHGAFWMFGSVCVVGLVFVIMYVPETQGKSLEDIERKMCGRVRRMSSVANIKPLSFNM</sequence>
<name>TRET1_CULQU</name>
<feature type="chain" id="PRO_0000395541" description="Facilitated trehalose transporter Tret1">
    <location>
        <begin position="1"/>
        <end position="517"/>
    </location>
</feature>
<feature type="topological domain" description="Cytoplasmic" evidence="2">
    <location>
        <begin position="1"/>
        <end position="56"/>
    </location>
</feature>
<feature type="transmembrane region" description="Helical; Name=1" evidence="2">
    <location>
        <begin position="57"/>
        <end position="77"/>
    </location>
</feature>
<feature type="topological domain" description="Extracellular" evidence="2">
    <location>
        <begin position="78"/>
        <end position="100"/>
    </location>
</feature>
<feature type="transmembrane region" description="Helical; Name=2" evidence="2">
    <location>
        <begin position="101"/>
        <end position="121"/>
    </location>
</feature>
<feature type="topological domain" description="Cytoplasmic" evidence="2">
    <location>
        <begin position="122"/>
        <end position="135"/>
    </location>
</feature>
<feature type="transmembrane region" description="Helical; Name=3" evidence="2">
    <location>
        <begin position="136"/>
        <end position="156"/>
    </location>
</feature>
<feature type="topological domain" description="Extracellular" evidence="2">
    <location>
        <begin position="157"/>
        <end position="158"/>
    </location>
</feature>
<feature type="transmembrane region" description="Helical; Name=4" evidence="2">
    <location>
        <begin position="159"/>
        <end position="179"/>
    </location>
</feature>
<feature type="topological domain" description="Cytoplasmic" evidence="2">
    <location>
        <begin position="180"/>
        <end position="184"/>
    </location>
</feature>
<feature type="transmembrane region" description="Helical; Name=5" evidence="2">
    <location>
        <begin position="185"/>
        <end position="205"/>
    </location>
</feature>
<feature type="topological domain" description="Extracellular" evidence="2">
    <location>
        <begin position="206"/>
        <end position="212"/>
    </location>
</feature>
<feature type="transmembrane region" description="Helical; Name=6" evidence="2">
    <location>
        <begin position="213"/>
        <end position="233"/>
    </location>
</feature>
<feature type="topological domain" description="Cytoplasmic" evidence="2">
    <location>
        <begin position="234"/>
        <end position="296"/>
    </location>
</feature>
<feature type="transmembrane region" description="Helical; Name=7" evidence="2">
    <location>
        <begin position="297"/>
        <end position="317"/>
    </location>
</feature>
<feature type="topological domain" description="Extracellular" evidence="2">
    <location>
        <begin position="318"/>
        <end position="333"/>
    </location>
</feature>
<feature type="transmembrane region" description="Helical; Name=8" evidence="2">
    <location>
        <begin position="334"/>
        <end position="354"/>
    </location>
</feature>
<feature type="topological domain" description="Cytoplasmic" evidence="2">
    <location>
        <begin position="355"/>
        <end position="360"/>
    </location>
</feature>
<feature type="transmembrane region" description="Helical; Name=9" evidence="2">
    <location>
        <begin position="361"/>
        <end position="381"/>
    </location>
</feature>
<feature type="topological domain" description="Extracellular" evidence="2">
    <location>
        <begin position="382"/>
        <end position="392"/>
    </location>
</feature>
<feature type="transmembrane region" description="Helical; Name=10" evidence="2">
    <location>
        <begin position="393"/>
        <end position="413"/>
    </location>
</feature>
<feature type="topological domain" description="Cytoplasmic" evidence="2">
    <location>
        <begin position="414"/>
        <end position="437"/>
    </location>
</feature>
<feature type="transmembrane region" description="Helical; Name=11" evidence="2">
    <location>
        <begin position="438"/>
        <end position="458"/>
    </location>
</feature>
<feature type="topological domain" description="Extracellular" evidence="2">
    <location>
        <begin position="459"/>
        <end position="461"/>
    </location>
</feature>
<feature type="transmembrane region" description="Helical; Name=12" evidence="2">
    <location>
        <begin position="462"/>
        <end position="482"/>
    </location>
</feature>
<feature type="topological domain" description="Cytoplasmic" evidence="2">
    <location>
        <begin position="483"/>
        <end position="517"/>
    </location>
</feature>
<feature type="glycosylation site" description="N-linked (GlcNAc...) asparagine" evidence="2">
    <location>
        <position position="88"/>
    </location>
</feature>
<dbReference type="EMBL" id="DS231885">
    <property type="protein sequence ID" value="EDS43198.1"/>
    <property type="molecule type" value="Genomic_DNA"/>
</dbReference>
<dbReference type="RefSeq" id="XP_001846280.1">
    <property type="nucleotide sequence ID" value="XM_001846228.1"/>
</dbReference>
<dbReference type="SMR" id="B0WC46"/>
<dbReference type="FunCoup" id="B0WC46">
    <property type="interactions" value="167"/>
</dbReference>
<dbReference type="STRING" id="7176.B0WC46"/>
<dbReference type="GlyCosmos" id="B0WC46">
    <property type="glycosylation" value="1 site, No reported glycans"/>
</dbReference>
<dbReference type="EnsemblMetazoa" id="CPIJ004516-RA">
    <property type="protein sequence ID" value="CPIJ004516-PA"/>
    <property type="gene ID" value="CPIJ004516"/>
</dbReference>
<dbReference type="GeneID" id="6036204"/>
<dbReference type="KEGG" id="cqu:CpipJ_CPIJ004516"/>
<dbReference type="CTD" id="36248"/>
<dbReference type="VEuPathDB" id="VectorBase:CPIJ004516"/>
<dbReference type="VEuPathDB" id="VectorBase:CQUJHB011511"/>
<dbReference type="eggNOG" id="KOG0254">
    <property type="taxonomic scope" value="Eukaryota"/>
</dbReference>
<dbReference type="HOGENOM" id="CLU_001265_30_5_1"/>
<dbReference type="InParanoid" id="B0WC46"/>
<dbReference type="OMA" id="AISMIYV"/>
<dbReference type="OrthoDB" id="6339427at2759"/>
<dbReference type="PhylomeDB" id="B0WC46"/>
<dbReference type="Proteomes" id="UP000002320">
    <property type="component" value="Unassembled WGS sequence"/>
</dbReference>
<dbReference type="GO" id="GO:0005886">
    <property type="term" value="C:plasma membrane"/>
    <property type="evidence" value="ECO:0000250"/>
    <property type="project" value="UniProtKB"/>
</dbReference>
<dbReference type="GO" id="GO:0051119">
    <property type="term" value="F:sugar transmembrane transporter activity"/>
    <property type="evidence" value="ECO:0007669"/>
    <property type="project" value="InterPro"/>
</dbReference>
<dbReference type="GO" id="GO:0015574">
    <property type="term" value="F:trehalose transmembrane transporter activity"/>
    <property type="evidence" value="ECO:0000250"/>
    <property type="project" value="UniProtKB"/>
</dbReference>
<dbReference type="GO" id="GO:0015771">
    <property type="term" value="P:trehalose transport"/>
    <property type="evidence" value="ECO:0000250"/>
    <property type="project" value="UniProtKB"/>
</dbReference>
<dbReference type="CDD" id="cd17358">
    <property type="entry name" value="MFS_GLUT6_8_Class3_like"/>
    <property type="match status" value="1"/>
</dbReference>
<dbReference type="FunFam" id="1.20.1250.20:FF:000055">
    <property type="entry name" value="Facilitated trehalose transporter Tret1-2 homolog"/>
    <property type="match status" value="1"/>
</dbReference>
<dbReference type="Gene3D" id="1.20.1250.20">
    <property type="entry name" value="MFS general substrate transporter like domains"/>
    <property type="match status" value="1"/>
</dbReference>
<dbReference type="InterPro" id="IPR020846">
    <property type="entry name" value="MFS_dom"/>
</dbReference>
<dbReference type="InterPro" id="IPR044775">
    <property type="entry name" value="MFS_ERD6/Tret1-like"/>
</dbReference>
<dbReference type="InterPro" id="IPR005828">
    <property type="entry name" value="MFS_sugar_transport-like"/>
</dbReference>
<dbReference type="InterPro" id="IPR036259">
    <property type="entry name" value="MFS_trans_sf"/>
</dbReference>
<dbReference type="InterPro" id="IPR050549">
    <property type="entry name" value="MFS_Trehalose_Transporter"/>
</dbReference>
<dbReference type="InterPro" id="IPR003663">
    <property type="entry name" value="Sugar/inositol_transpt"/>
</dbReference>
<dbReference type="InterPro" id="IPR005829">
    <property type="entry name" value="Sugar_transporter_CS"/>
</dbReference>
<dbReference type="NCBIfam" id="TIGR00879">
    <property type="entry name" value="SP"/>
    <property type="match status" value="1"/>
</dbReference>
<dbReference type="PANTHER" id="PTHR48021">
    <property type="match status" value="1"/>
</dbReference>
<dbReference type="PANTHER" id="PTHR48021:SF96">
    <property type="entry name" value="FACILITATED TREHALOSE TRANSPORTER TRET1-1-RELATED"/>
    <property type="match status" value="1"/>
</dbReference>
<dbReference type="Pfam" id="PF00083">
    <property type="entry name" value="Sugar_tr"/>
    <property type="match status" value="1"/>
</dbReference>
<dbReference type="PRINTS" id="PR00171">
    <property type="entry name" value="SUGRTRNSPORT"/>
</dbReference>
<dbReference type="SUPFAM" id="SSF103473">
    <property type="entry name" value="MFS general substrate transporter"/>
    <property type="match status" value="1"/>
</dbReference>
<dbReference type="PROSITE" id="PS50850">
    <property type="entry name" value="MFS"/>
    <property type="match status" value="1"/>
</dbReference>
<dbReference type="PROSITE" id="PS00216">
    <property type="entry name" value="SUGAR_TRANSPORT_1"/>
    <property type="match status" value="1"/>
</dbReference>
<dbReference type="PROSITE" id="PS00217">
    <property type="entry name" value="SUGAR_TRANSPORT_2"/>
    <property type="match status" value="1"/>
</dbReference>
<reference evidence="3" key="1">
    <citation type="submission" date="2007-03" db="EMBL/GenBank/DDBJ databases">
        <title>Annotation of Culex pipiens quinquefasciatus.</title>
        <authorList>
            <consortium name="The Broad Institute Genome Sequencing Platform"/>
            <person name="Atkinson P.W."/>
            <person name="Hemingway J."/>
            <person name="Christensen B.M."/>
            <person name="Higgs S."/>
            <person name="Kodira C.D."/>
            <person name="Hannick L.I."/>
            <person name="Megy K."/>
            <person name="O'Leary S.B."/>
            <person name="Pearson M."/>
            <person name="Haas B.J."/>
            <person name="Mauceli E."/>
            <person name="Wortman J.R."/>
            <person name="Lee N.H."/>
            <person name="Guigo R."/>
            <person name="Stanke M."/>
            <person name="Alvarado L."/>
            <person name="Amedeo P."/>
            <person name="Antoine C.H."/>
            <person name="Arensburger P."/>
            <person name="Bidwell S.L."/>
            <person name="Crawford M."/>
            <person name="Camaro F."/>
            <person name="Devon K."/>
            <person name="Engels R."/>
            <person name="Hammond M."/>
            <person name="Howarth C."/>
            <person name="Koehrsen M."/>
            <person name="Lawson D."/>
            <person name="Montgomery P."/>
            <person name="Nene V."/>
            <person name="Nusbaum C."/>
            <person name="Puiu D."/>
            <person name="Romero-Severson J."/>
            <person name="Severson D.W."/>
            <person name="Shumway M."/>
            <person name="Sisk P."/>
            <person name="Stolte C."/>
            <person name="Zeng Q."/>
            <person name="Eisenstadt E."/>
            <person name="Fraser-Liggett C.M."/>
            <person name="Strausberg R."/>
            <person name="Galagan J."/>
            <person name="Birren B."/>
            <person name="Collins F.H."/>
        </authorList>
    </citation>
    <scope>NUCLEOTIDE SEQUENCE [LARGE SCALE GENOMIC DNA]</scope>
    <source>
        <strain evidence="3">JHB</strain>
    </source>
</reference>
<accession>B0WC46</accession>